<dbReference type="EC" id="1.7.1.13" evidence="1"/>
<dbReference type="EMBL" id="CP001393">
    <property type="protein sequence ID" value="ACM61708.1"/>
    <property type="molecule type" value="Genomic_DNA"/>
</dbReference>
<dbReference type="RefSeq" id="WP_013291477.1">
    <property type="nucleotide sequence ID" value="NC_012034.1"/>
</dbReference>
<dbReference type="SMR" id="B9MPS5"/>
<dbReference type="STRING" id="521460.Athe_2643"/>
<dbReference type="GeneID" id="31773999"/>
<dbReference type="KEGG" id="ate:Athe_2643"/>
<dbReference type="eggNOG" id="COG0780">
    <property type="taxonomic scope" value="Bacteria"/>
</dbReference>
<dbReference type="HOGENOM" id="CLU_102489_1_2_9"/>
<dbReference type="UniPathway" id="UPA00392"/>
<dbReference type="Proteomes" id="UP000007723">
    <property type="component" value="Chromosome"/>
</dbReference>
<dbReference type="GO" id="GO:0005737">
    <property type="term" value="C:cytoplasm"/>
    <property type="evidence" value="ECO:0007669"/>
    <property type="project" value="UniProtKB-SubCell"/>
</dbReference>
<dbReference type="GO" id="GO:0033739">
    <property type="term" value="F:preQ1 synthase activity"/>
    <property type="evidence" value="ECO:0007669"/>
    <property type="project" value="UniProtKB-UniRule"/>
</dbReference>
<dbReference type="GO" id="GO:0008616">
    <property type="term" value="P:queuosine biosynthetic process"/>
    <property type="evidence" value="ECO:0007669"/>
    <property type="project" value="UniProtKB-UniRule"/>
</dbReference>
<dbReference type="GO" id="GO:0006400">
    <property type="term" value="P:tRNA modification"/>
    <property type="evidence" value="ECO:0007669"/>
    <property type="project" value="UniProtKB-UniRule"/>
</dbReference>
<dbReference type="Gene3D" id="3.30.1130.10">
    <property type="match status" value="1"/>
</dbReference>
<dbReference type="HAMAP" id="MF_00818">
    <property type="entry name" value="QueF_type1"/>
    <property type="match status" value="1"/>
</dbReference>
<dbReference type="InterPro" id="IPR043133">
    <property type="entry name" value="GTP-CH-I_C/QueF"/>
</dbReference>
<dbReference type="InterPro" id="IPR050084">
    <property type="entry name" value="NADPH_dep_7-cyano-7-deazaG_red"/>
</dbReference>
<dbReference type="InterPro" id="IPR029500">
    <property type="entry name" value="QueF"/>
</dbReference>
<dbReference type="InterPro" id="IPR016856">
    <property type="entry name" value="QueF_type1"/>
</dbReference>
<dbReference type="NCBIfam" id="TIGR03139">
    <property type="entry name" value="QueF-II"/>
    <property type="match status" value="1"/>
</dbReference>
<dbReference type="PANTHER" id="PTHR34354">
    <property type="entry name" value="NADPH-DEPENDENT 7-CYANO-7-DEAZAGUANINE REDUCTASE"/>
    <property type="match status" value="1"/>
</dbReference>
<dbReference type="PANTHER" id="PTHR34354:SF1">
    <property type="entry name" value="NADPH-DEPENDENT 7-CYANO-7-DEAZAGUANINE REDUCTASE"/>
    <property type="match status" value="1"/>
</dbReference>
<dbReference type="Pfam" id="PF14489">
    <property type="entry name" value="QueF"/>
    <property type="match status" value="1"/>
</dbReference>
<dbReference type="PIRSF" id="PIRSF027377">
    <property type="entry name" value="Nitrile_oxidored_QueF"/>
    <property type="match status" value="1"/>
</dbReference>
<dbReference type="SUPFAM" id="SSF55620">
    <property type="entry name" value="Tetrahydrobiopterin biosynthesis enzymes-like"/>
    <property type="match status" value="1"/>
</dbReference>
<reference key="1">
    <citation type="submission" date="2009-01" db="EMBL/GenBank/DDBJ databases">
        <title>Complete sequence of chromosome of Caldicellulosiruptor becscii DSM 6725.</title>
        <authorList>
            <person name="Lucas S."/>
            <person name="Copeland A."/>
            <person name="Lapidus A."/>
            <person name="Glavina del Rio T."/>
            <person name="Tice H."/>
            <person name="Bruce D."/>
            <person name="Goodwin L."/>
            <person name="Pitluck S."/>
            <person name="Sims D."/>
            <person name="Meincke L."/>
            <person name="Brettin T."/>
            <person name="Detter J.C."/>
            <person name="Han C."/>
            <person name="Larimer F."/>
            <person name="Land M."/>
            <person name="Hauser L."/>
            <person name="Kyrpides N."/>
            <person name="Ovchinnikova G."/>
            <person name="Kataeva I."/>
            <person name="Adams M.W.W."/>
        </authorList>
    </citation>
    <scope>NUCLEOTIDE SEQUENCE [LARGE SCALE GENOMIC DNA]</scope>
    <source>
        <strain>ATCC BAA-1888 / DSM 6725 / KCTC 15123 / Z-1320</strain>
    </source>
</reference>
<sequence>MSDKYQQRRFDIYGYEKIDTEVLEAIPYEYPEKNTVVEYITEEFSSVCPWTGLPDTAKLTIRYIPHQKLVELKSLKYYLTSYRNVGILQEHAVNRILDDLVKLLEPKFMEVIGEFHERGGISTKVVARYEK</sequence>
<organism>
    <name type="scientific">Caldicellulosiruptor bescii (strain ATCC BAA-1888 / DSM 6725 / KCTC 15123 / Z-1320)</name>
    <name type="common">Anaerocellum thermophilum</name>
    <dbReference type="NCBI Taxonomy" id="521460"/>
    <lineage>
        <taxon>Bacteria</taxon>
        <taxon>Bacillati</taxon>
        <taxon>Bacillota</taxon>
        <taxon>Bacillota incertae sedis</taxon>
        <taxon>Caldicellulosiruptorales</taxon>
        <taxon>Caldicellulosiruptoraceae</taxon>
        <taxon>Caldicellulosiruptor</taxon>
    </lineage>
</organism>
<name>QUEF_CALBD</name>
<gene>
    <name evidence="1" type="primary">queF</name>
    <name type="ordered locus">Athe_2643</name>
</gene>
<evidence type="ECO:0000255" key="1">
    <source>
        <dbReference type="HAMAP-Rule" id="MF_00818"/>
    </source>
</evidence>
<protein>
    <recommendedName>
        <fullName evidence="1">NADPH-dependent 7-cyano-7-deazaguanine reductase</fullName>
        <ecNumber evidence="1">1.7.1.13</ecNumber>
    </recommendedName>
    <alternativeName>
        <fullName evidence="1">7-cyano-7-carbaguanine reductase</fullName>
    </alternativeName>
    <alternativeName>
        <fullName evidence="1">NADPH-dependent nitrile oxidoreductase</fullName>
    </alternativeName>
    <alternativeName>
        <fullName evidence="1">PreQ(0) reductase</fullName>
    </alternativeName>
</protein>
<keyword id="KW-0963">Cytoplasm</keyword>
<keyword id="KW-0521">NADP</keyword>
<keyword id="KW-0560">Oxidoreductase</keyword>
<keyword id="KW-0671">Queuosine biosynthesis</keyword>
<feature type="chain" id="PRO_1000148663" description="NADPH-dependent 7-cyano-7-deazaguanine reductase">
    <location>
        <begin position="1"/>
        <end position="131"/>
    </location>
</feature>
<feature type="active site" description="Thioimide intermediate" evidence="1">
    <location>
        <position position="48"/>
    </location>
</feature>
<feature type="active site" description="Proton donor" evidence="1">
    <location>
        <position position="55"/>
    </location>
</feature>
<feature type="binding site" evidence="1">
    <location>
        <begin position="70"/>
        <end position="72"/>
    </location>
    <ligand>
        <name>substrate</name>
    </ligand>
</feature>
<feature type="binding site" evidence="1">
    <location>
        <begin position="89"/>
        <end position="90"/>
    </location>
    <ligand>
        <name>substrate</name>
    </ligand>
</feature>
<comment type="function">
    <text evidence="1">Catalyzes the NADPH-dependent reduction of 7-cyano-7-deazaguanine (preQ0) to 7-aminomethyl-7-deazaguanine (preQ1).</text>
</comment>
<comment type="catalytic activity">
    <reaction evidence="1">
        <text>7-aminomethyl-7-carbaguanine + 2 NADP(+) = 7-cyano-7-deazaguanine + 2 NADPH + 3 H(+)</text>
        <dbReference type="Rhea" id="RHEA:13409"/>
        <dbReference type="ChEBI" id="CHEBI:15378"/>
        <dbReference type="ChEBI" id="CHEBI:45075"/>
        <dbReference type="ChEBI" id="CHEBI:57783"/>
        <dbReference type="ChEBI" id="CHEBI:58349"/>
        <dbReference type="ChEBI" id="CHEBI:58703"/>
        <dbReference type="EC" id="1.7.1.13"/>
    </reaction>
</comment>
<comment type="pathway">
    <text evidence="1">tRNA modification; tRNA-queuosine biosynthesis.</text>
</comment>
<comment type="subcellular location">
    <subcellularLocation>
        <location evidence="1">Cytoplasm</location>
    </subcellularLocation>
</comment>
<comment type="similarity">
    <text evidence="1">Belongs to the GTP cyclohydrolase I family. QueF type 1 subfamily.</text>
</comment>
<accession>B9MPS5</accession>
<proteinExistence type="inferred from homology"/>